<sequence length="1151" mass="125439">MRFTRLRLNGFKSFVDPTDLVIHEGLTGVVGPNGCGKSNLLEALRWVMGENRPTAMRGAGMEDVIFAGAATRPARNFAEVALVLDNADRLAPAGFNDADTIEIVRRITRDAGSAYKANTKDVRARDIQMLFADASTGAHSPALVRQGQISELINAKPKARRRILEEAAGISGLYQRRHEAELRLAATEQNLARVEDVLDQLAQQLSTLARQAKQAARYREIGEELRRAEGSLLYRRWREADLARTEALAILRERMTAAGQAEAAARKAAGARAEAEATLPPKREEEAIAGAVLQRLTVERDTLAAEEDRARATIATLVSRVDQLGRDIEREAGLNRDAAETIGRLEWEREALETAHEGHEERLAEAAEAAREAGAALGEREEILSERTEDAARLSARHQSAQRMLVDSRTTLARSEAEAARARETVEAAAEAQERAAETWEEAAAAQEEAQERAEAAEEALVQADEARAEAQSREAEARAQRSAAEGEANALRAEVAALARLVDREAQAGSQLLDRIQVEPGFEAALGAALSDDLRAPEVAADAPSGWAALPDYDETAPLPAGAEPLAPHVGVPEVLRRRIGQIGLVGREAGAALQPLLQPGQRLVSIEGDLWRWDGFRAGAEDAPSAAALRLKQLNRLVALKRDLEEVAARAEGARQAHEALQARLAQLTRADQEAREARRAADARVTEASRAAARAEADRSISGGKLESARLAVKRYEDEAMEARARLREAEGVASALPDLEAARAGLEDLKMAVEAARIAMMSRRSLHDELRREGEARVKRRQEVTKDLSGWKHRLETAEKRSAELAERKAETEEALREAAEAPEEIAARREELAEAIEAAEERRARASDALASAEAALRAAQEAEREAERQAGESREARARAEARADAATEALQLAAERIREETERTPQQLLEALAVDPERIPTVEALETDVGRLKRQREALGAVNLRAEEDAQAVQTEHDTLKAEKTDLEEAVKKLRAGIQGLNREGRERLLTAFEQVNASFGTLFTHLFGGGEARLVMVESDDPLEAGLEIMCQPPGKKLSTLSLLSGGEQTLTALALIFAVFLANPAPICVLDEVDAPLDDANVTRFCDLLDEMTRRTETRFLIITHHAVTMARMDRLFGVTMAEQGVSQLVSVDLKRAEALVA</sequence>
<reference key="1">
    <citation type="submission" date="2007-02" db="EMBL/GenBank/DDBJ databases">
        <title>Complete sequence of chromosome 1 of Rhodobacter sphaeroides ATCC 17029.</title>
        <authorList>
            <person name="Copeland A."/>
            <person name="Lucas S."/>
            <person name="Lapidus A."/>
            <person name="Barry K."/>
            <person name="Detter J.C."/>
            <person name="Glavina del Rio T."/>
            <person name="Hammon N."/>
            <person name="Israni S."/>
            <person name="Dalin E."/>
            <person name="Tice H."/>
            <person name="Pitluck S."/>
            <person name="Kiss H."/>
            <person name="Brettin T."/>
            <person name="Bruce D."/>
            <person name="Han C."/>
            <person name="Tapia R."/>
            <person name="Gilna P."/>
            <person name="Schmutz J."/>
            <person name="Larimer F."/>
            <person name="Land M."/>
            <person name="Hauser L."/>
            <person name="Kyrpides N."/>
            <person name="Mikhailova N."/>
            <person name="Richardson P."/>
            <person name="Mackenzie C."/>
            <person name="Choudhary M."/>
            <person name="Donohue T.J."/>
            <person name="Kaplan S."/>
        </authorList>
    </citation>
    <scope>NUCLEOTIDE SEQUENCE [LARGE SCALE GENOMIC DNA]</scope>
    <source>
        <strain>ATCC 17029 / ATH 2.4.9</strain>
    </source>
</reference>
<proteinExistence type="inferred from homology"/>
<dbReference type="EMBL" id="CP000577">
    <property type="protein sequence ID" value="ABN77638.1"/>
    <property type="status" value="ALT_INIT"/>
    <property type="molecule type" value="Genomic_DNA"/>
</dbReference>
<dbReference type="RefSeq" id="WP_043828167.1">
    <property type="nucleotide sequence ID" value="NC_009049.1"/>
</dbReference>
<dbReference type="SMR" id="A3PMS2"/>
<dbReference type="KEGG" id="rsh:Rsph17029_2536"/>
<dbReference type="HOGENOM" id="CLU_001042_2_2_5"/>
<dbReference type="GO" id="GO:0005737">
    <property type="term" value="C:cytoplasm"/>
    <property type="evidence" value="ECO:0007669"/>
    <property type="project" value="UniProtKB-SubCell"/>
</dbReference>
<dbReference type="GO" id="GO:0005524">
    <property type="term" value="F:ATP binding"/>
    <property type="evidence" value="ECO:0007669"/>
    <property type="project" value="UniProtKB-UniRule"/>
</dbReference>
<dbReference type="GO" id="GO:0016887">
    <property type="term" value="F:ATP hydrolysis activity"/>
    <property type="evidence" value="ECO:0007669"/>
    <property type="project" value="InterPro"/>
</dbReference>
<dbReference type="GO" id="GO:0003677">
    <property type="term" value="F:DNA binding"/>
    <property type="evidence" value="ECO:0007669"/>
    <property type="project" value="UniProtKB-UniRule"/>
</dbReference>
<dbReference type="GO" id="GO:0030261">
    <property type="term" value="P:chromosome condensation"/>
    <property type="evidence" value="ECO:0007669"/>
    <property type="project" value="InterPro"/>
</dbReference>
<dbReference type="GO" id="GO:0007059">
    <property type="term" value="P:chromosome segregation"/>
    <property type="evidence" value="ECO:0007669"/>
    <property type="project" value="UniProtKB-UniRule"/>
</dbReference>
<dbReference type="GO" id="GO:0006260">
    <property type="term" value="P:DNA replication"/>
    <property type="evidence" value="ECO:0007669"/>
    <property type="project" value="UniProtKB-UniRule"/>
</dbReference>
<dbReference type="GO" id="GO:0007062">
    <property type="term" value="P:sister chromatid cohesion"/>
    <property type="evidence" value="ECO:0007669"/>
    <property type="project" value="InterPro"/>
</dbReference>
<dbReference type="CDD" id="cd03278">
    <property type="entry name" value="ABC_SMC_barmotin"/>
    <property type="match status" value="1"/>
</dbReference>
<dbReference type="FunFam" id="3.40.50.300:FF:000901">
    <property type="entry name" value="Chromosome partition protein Smc"/>
    <property type="match status" value="1"/>
</dbReference>
<dbReference type="Gene3D" id="3.40.50.300">
    <property type="entry name" value="P-loop containing nucleotide triphosphate hydrolases"/>
    <property type="match status" value="2"/>
</dbReference>
<dbReference type="HAMAP" id="MF_01894">
    <property type="entry name" value="Smc_prok"/>
    <property type="match status" value="1"/>
</dbReference>
<dbReference type="InterPro" id="IPR027417">
    <property type="entry name" value="P-loop_NTPase"/>
</dbReference>
<dbReference type="InterPro" id="IPR003395">
    <property type="entry name" value="RecF/RecN/SMC_N"/>
</dbReference>
<dbReference type="InterPro" id="IPR024704">
    <property type="entry name" value="SMC"/>
</dbReference>
<dbReference type="InterPro" id="IPR011890">
    <property type="entry name" value="SMC_prok"/>
</dbReference>
<dbReference type="NCBIfam" id="TIGR02168">
    <property type="entry name" value="SMC_prok_B"/>
    <property type="match status" value="1"/>
</dbReference>
<dbReference type="PANTHER" id="PTHR43977">
    <property type="entry name" value="STRUCTURAL MAINTENANCE OF CHROMOSOMES PROTEIN 3"/>
    <property type="match status" value="1"/>
</dbReference>
<dbReference type="Pfam" id="PF02463">
    <property type="entry name" value="SMC_N"/>
    <property type="match status" value="1"/>
</dbReference>
<dbReference type="PIRSF" id="PIRSF005719">
    <property type="entry name" value="SMC"/>
    <property type="match status" value="1"/>
</dbReference>
<dbReference type="SUPFAM" id="SSF52540">
    <property type="entry name" value="P-loop containing nucleoside triphosphate hydrolases"/>
    <property type="match status" value="1"/>
</dbReference>
<comment type="function">
    <text evidence="1">Required for chromosome condensation and partitioning.</text>
</comment>
<comment type="subunit">
    <text evidence="1">Homodimer.</text>
</comment>
<comment type="subcellular location">
    <subcellularLocation>
        <location evidence="1">Cytoplasm</location>
    </subcellularLocation>
</comment>
<comment type="domain">
    <text evidence="1">Contains large globular domains required for ATP hydrolysis at each terminus and a third globular domain forming a flexible hinge near the middle of the molecule. These domains are separated by coiled-coil structures.</text>
</comment>
<comment type="similarity">
    <text evidence="1">Belongs to the SMC family.</text>
</comment>
<comment type="sequence caution" evidence="3">
    <conflict type="erroneous initiation">
        <sequence resource="EMBL-CDS" id="ABN77638"/>
    </conflict>
    <text>Extended N-terminus.</text>
</comment>
<name>SMC_CERS1</name>
<accession>A3PMS2</accession>
<organism>
    <name type="scientific">Cereibacter sphaeroides (strain ATCC 17029 / ATH 2.4.9)</name>
    <name type="common">Rhodobacter sphaeroides</name>
    <dbReference type="NCBI Taxonomy" id="349101"/>
    <lineage>
        <taxon>Bacteria</taxon>
        <taxon>Pseudomonadati</taxon>
        <taxon>Pseudomonadota</taxon>
        <taxon>Alphaproteobacteria</taxon>
        <taxon>Rhodobacterales</taxon>
        <taxon>Paracoccaceae</taxon>
        <taxon>Cereibacter</taxon>
    </lineage>
</organism>
<protein>
    <recommendedName>
        <fullName evidence="1">Chromosome partition protein Smc</fullName>
    </recommendedName>
</protein>
<evidence type="ECO:0000255" key="1">
    <source>
        <dbReference type="HAMAP-Rule" id="MF_01894"/>
    </source>
</evidence>
<evidence type="ECO:0000256" key="2">
    <source>
        <dbReference type="SAM" id="MobiDB-lite"/>
    </source>
</evidence>
<evidence type="ECO:0000305" key="3"/>
<gene>
    <name evidence="1" type="primary">smc</name>
    <name type="ordered locus">Rsph17029_2536</name>
</gene>
<feature type="chain" id="PRO_0000409278" description="Chromosome partition protein Smc">
    <location>
        <begin position="1"/>
        <end position="1151"/>
    </location>
</feature>
<feature type="region of interest" description="Disordered" evidence="2">
    <location>
        <begin position="421"/>
        <end position="483"/>
    </location>
</feature>
<feature type="region of interest" description="Disordered" evidence="2">
    <location>
        <begin position="806"/>
        <end position="826"/>
    </location>
</feature>
<feature type="region of interest" description="Disordered" evidence="2">
    <location>
        <begin position="862"/>
        <end position="889"/>
    </location>
</feature>
<feature type="coiled-coil region" evidence="1">
    <location>
        <begin position="170"/>
        <end position="218"/>
    </location>
</feature>
<feature type="coiled-coil region" evidence="1">
    <location>
        <begin position="342"/>
        <end position="379"/>
    </location>
</feature>
<feature type="coiled-coil region" evidence="1">
    <location>
        <begin position="407"/>
        <end position="508"/>
    </location>
</feature>
<feature type="coiled-coil region" evidence="1">
    <location>
        <begin position="633"/>
        <end position="994"/>
    </location>
</feature>
<feature type="compositionally biased region" description="Basic and acidic residues" evidence="2">
    <location>
        <begin position="421"/>
        <end position="438"/>
    </location>
</feature>
<feature type="compositionally biased region" description="Basic and acidic residues" evidence="2">
    <location>
        <begin position="465"/>
        <end position="480"/>
    </location>
</feature>
<feature type="compositionally biased region" description="Basic and acidic residues" evidence="2">
    <location>
        <begin position="866"/>
        <end position="889"/>
    </location>
</feature>
<feature type="binding site" evidence="1">
    <location>
        <begin position="32"/>
        <end position="39"/>
    </location>
    <ligand>
        <name>ATP</name>
        <dbReference type="ChEBI" id="CHEBI:30616"/>
    </ligand>
</feature>
<keyword id="KW-0067">ATP-binding</keyword>
<keyword id="KW-0175">Coiled coil</keyword>
<keyword id="KW-0963">Cytoplasm</keyword>
<keyword id="KW-0238">DNA-binding</keyword>
<keyword id="KW-0547">Nucleotide-binding</keyword>